<feature type="chain" id="PRO_1000187690" description="Membrane protein insertase YidC">
    <location>
        <begin position="1"/>
        <end position="578"/>
    </location>
</feature>
<feature type="transmembrane region" description="Helical" evidence="1">
    <location>
        <begin position="3"/>
        <end position="23"/>
    </location>
</feature>
<feature type="transmembrane region" description="Helical" evidence="1">
    <location>
        <begin position="361"/>
        <end position="381"/>
    </location>
</feature>
<feature type="transmembrane region" description="Helical" evidence="1">
    <location>
        <begin position="387"/>
        <end position="407"/>
    </location>
</feature>
<feature type="transmembrane region" description="Helical" evidence="1">
    <location>
        <begin position="457"/>
        <end position="477"/>
    </location>
</feature>
<feature type="transmembrane region" description="Helical" evidence="1">
    <location>
        <begin position="500"/>
        <end position="520"/>
    </location>
</feature>
<feature type="transmembrane region" description="Helical" evidence="1">
    <location>
        <begin position="535"/>
        <end position="555"/>
    </location>
</feature>
<feature type="region of interest" description="Disordered" evidence="2">
    <location>
        <begin position="34"/>
        <end position="72"/>
    </location>
</feature>
<feature type="compositionally biased region" description="Polar residues" evidence="2">
    <location>
        <begin position="37"/>
        <end position="66"/>
    </location>
</feature>
<reference key="1">
    <citation type="journal article" date="2009" name="Genome Res.">
        <title>Newly introduced genomic prophage islands are critical determinants of in vivo competitiveness in the Liverpool epidemic strain of Pseudomonas aeruginosa.</title>
        <authorList>
            <person name="Winstanley C."/>
            <person name="Langille M.G.I."/>
            <person name="Fothergill J.L."/>
            <person name="Kukavica-Ibrulj I."/>
            <person name="Paradis-Bleau C."/>
            <person name="Sanschagrin F."/>
            <person name="Thomson N.R."/>
            <person name="Winsor G.L."/>
            <person name="Quail M.A."/>
            <person name="Lennard N."/>
            <person name="Bignell A."/>
            <person name="Clarke L."/>
            <person name="Seeger K."/>
            <person name="Saunders D."/>
            <person name="Harris D."/>
            <person name="Parkhill J."/>
            <person name="Hancock R.E.W."/>
            <person name="Brinkman F.S.L."/>
            <person name="Levesque R.C."/>
        </authorList>
    </citation>
    <scope>NUCLEOTIDE SEQUENCE [LARGE SCALE GENOMIC DNA]</scope>
    <source>
        <strain>LESB58</strain>
    </source>
</reference>
<organism>
    <name type="scientific">Pseudomonas aeruginosa (strain LESB58)</name>
    <dbReference type="NCBI Taxonomy" id="557722"/>
    <lineage>
        <taxon>Bacteria</taxon>
        <taxon>Pseudomonadati</taxon>
        <taxon>Pseudomonadota</taxon>
        <taxon>Gammaproteobacteria</taxon>
        <taxon>Pseudomonadales</taxon>
        <taxon>Pseudomonadaceae</taxon>
        <taxon>Pseudomonas</taxon>
    </lineage>
</organism>
<comment type="function">
    <text evidence="1">Required for the insertion and/or proper folding and/or complex formation of integral membrane proteins into the membrane. Involved in integration of membrane proteins that insert both dependently and independently of the Sec translocase complex, as well as at least some lipoproteins. Aids folding of multispanning membrane proteins.</text>
</comment>
<comment type="subunit">
    <text evidence="1">Interacts with the Sec translocase complex via SecD. Specifically interacts with transmembrane segments of nascent integral membrane proteins during membrane integration.</text>
</comment>
<comment type="subcellular location">
    <subcellularLocation>
        <location evidence="1">Cell inner membrane</location>
        <topology evidence="1">Multi-pass membrane protein</topology>
    </subcellularLocation>
</comment>
<comment type="similarity">
    <text evidence="1">Belongs to the OXA1/ALB3/YidC family. Type 1 subfamily.</text>
</comment>
<gene>
    <name evidence="1" type="primary">yidC</name>
    <name type="ordered locus">PLES_59641</name>
</gene>
<sequence>MDIQRSILIVALAVVSYLLVLQWNKDYGQPELPAASASMNTTQGLPDTPSASGTSSDVPTAQSSAAGSEAADKPVAVSDKLIQVKTDVLDLAIDPRGGDIVQLGLLQYPRRLDRPDVPFPLFDNGRERTYLAQSGLTGADGPDASSAGRPLFHSAQSSYQLADGQNELVVDLSFSHDGVNYIKRFTFHRGLKADCSDKEKAQKKIECINENAYQVGVSYLIDNQSGKTWSGNLFAQLKRDGSADPSSTTATGVSTYLGAAVWTPDSPYKKISTKDMDKEQFKESVQGGWVAWLQHYFVTAWVPTKGEQHQVMTRKDGQGNYIVGFTGPTLSVPAGSKVETDLTLYAGPKLQKHLKELSPGLELTVDYGFLWFIAQPIFWLLQHIHSLIGNWGWSIIALTVLIKLAFFPLSAASYRSMARMRAVSPKMQAIKEQHGDDRQKMSQAMMELYKKEKINPLGGCLPILVQMPVFLSLYWVLLESVEMRQAPWLGWITDLSVKDPFFILPIVMGGTMLIQQMLNPTPPDPMQAKVMKLMPIIFTFFFLWFPAGLVLYWVVNNCLSIAQQWYITRKIEAAAKTA</sequence>
<protein>
    <recommendedName>
        <fullName evidence="1">Membrane protein insertase YidC</fullName>
    </recommendedName>
    <alternativeName>
        <fullName evidence="1">Foldase YidC</fullName>
    </alternativeName>
    <alternativeName>
        <fullName evidence="1">Membrane integrase YidC</fullName>
    </alternativeName>
    <alternativeName>
        <fullName evidence="1">Membrane protein YidC</fullName>
    </alternativeName>
</protein>
<accession>B7V7A5</accession>
<keyword id="KW-0997">Cell inner membrane</keyword>
<keyword id="KW-1003">Cell membrane</keyword>
<keyword id="KW-0143">Chaperone</keyword>
<keyword id="KW-0472">Membrane</keyword>
<keyword id="KW-0653">Protein transport</keyword>
<keyword id="KW-0812">Transmembrane</keyword>
<keyword id="KW-1133">Transmembrane helix</keyword>
<keyword id="KW-0813">Transport</keyword>
<evidence type="ECO:0000255" key="1">
    <source>
        <dbReference type="HAMAP-Rule" id="MF_01810"/>
    </source>
</evidence>
<evidence type="ECO:0000256" key="2">
    <source>
        <dbReference type="SAM" id="MobiDB-lite"/>
    </source>
</evidence>
<dbReference type="EMBL" id="FM209186">
    <property type="protein sequence ID" value="CAW30718.1"/>
    <property type="molecule type" value="Genomic_DNA"/>
</dbReference>
<dbReference type="RefSeq" id="WP_003097255.1">
    <property type="nucleotide sequence ID" value="NC_011770.1"/>
</dbReference>
<dbReference type="SMR" id="B7V7A5"/>
<dbReference type="KEGG" id="pag:PLES_59641"/>
<dbReference type="HOGENOM" id="CLU_016535_3_0_6"/>
<dbReference type="GO" id="GO:0005886">
    <property type="term" value="C:plasma membrane"/>
    <property type="evidence" value="ECO:0007669"/>
    <property type="project" value="UniProtKB-SubCell"/>
</dbReference>
<dbReference type="GO" id="GO:0032977">
    <property type="term" value="F:membrane insertase activity"/>
    <property type="evidence" value="ECO:0007669"/>
    <property type="project" value="InterPro"/>
</dbReference>
<dbReference type="GO" id="GO:0051205">
    <property type="term" value="P:protein insertion into membrane"/>
    <property type="evidence" value="ECO:0007669"/>
    <property type="project" value="TreeGrafter"/>
</dbReference>
<dbReference type="GO" id="GO:0015031">
    <property type="term" value="P:protein transport"/>
    <property type="evidence" value="ECO:0007669"/>
    <property type="project" value="UniProtKB-KW"/>
</dbReference>
<dbReference type="CDD" id="cd20070">
    <property type="entry name" value="5TM_YidC_Alb3"/>
    <property type="match status" value="1"/>
</dbReference>
<dbReference type="CDD" id="cd19961">
    <property type="entry name" value="EcYidC-like_peri"/>
    <property type="match status" value="1"/>
</dbReference>
<dbReference type="FunFam" id="2.70.98.90:FF:000005">
    <property type="entry name" value="Membrane protein insertase YidC"/>
    <property type="match status" value="1"/>
</dbReference>
<dbReference type="Gene3D" id="2.70.98.90">
    <property type="match status" value="1"/>
</dbReference>
<dbReference type="HAMAP" id="MF_01810">
    <property type="entry name" value="YidC_type1"/>
    <property type="match status" value="1"/>
</dbReference>
<dbReference type="InterPro" id="IPR019998">
    <property type="entry name" value="Membr_insert_YidC"/>
</dbReference>
<dbReference type="InterPro" id="IPR028053">
    <property type="entry name" value="Membr_insert_YidC_N"/>
</dbReference>
<dbReference type="InterPro" id="IPR001708">
    <property type="entry name" value="YidC/ALB3/OXA1/COX18"/>
</dbReference>
<dbReference type="InterPro" id="IPR028055">
    <property type="entry name" value="YidC/Oxa/ALB_C"/>
</dbReference>
<dbReference type="InterPro" id="IPR047196">
    <property type="entry name" value="YidC_ALB_C"/>
</dbReference>
<dbReference type="InterPro" id="IPR038221">
    <property type="entry name" value="YidC_periplasmic_sf"/>
</dbReference>
<dbReference type="NCBIfam" id="NF002352">
    <property type="entry name" value="PRK01318.1-3"/>
    <property type="match status" value="1"/>
</dbReference>
<dbReference type="NCBIfam" id="TIGR03593">
    <property type="entry name" value="yidC_nterm"/>
    <property type="match status" value="2"/>
</dbReference>
<dbReference type="NCBIfam" id="TIGR03592">
    <property type="entry name" value="yidC_oxa1_cterm"/>
    <property type="match status" value="1"/>
</dbReference>
<dbReference type="PANTHER" id="PTHR12428:SF65">
    <property type="entry name" value="CYTOCHROME C OXIDASE ASSEMBLY PROTEIN COX18, MITOCHONDRIAL"/>
    <property type="match status" value="1"/>
</dbReference>
<dbReference type="PANTHER" id="PTHR12428">
    <property type="entry name" value="OXA1"/>
    <property type="match status" value="1"/>
</dbReference>
<dbReference type="Pfam" id="PF02096">
    <property type="entry name" value="60KD_IMP"/>
    <property type="match status" value="1"/>
</dbReference>
<dbReference type="Pfam" id="PF14849">
    <property type="entry name" value="YidC_periplas"/>
    <property type="match status" value="2"/>
</dbReference>
<dbReference type="PRINTS" id="PR00701">
    <property type="entry name" value="60KDINNERMP"/>
</dbReference>
<dbReference type="PRINTS" id="PR01900">
    <property type="entry name" value="YIDCPROTEIN"/>
</dbReference>
<proteinExistence type="inferred from homology"/>
<name>YIDC_PSEA8</name>